<reference key="1">
    <citation type="journal article" date="1997" name="Gene">
        <title>SA-1, a nuclear protein encoded by one member of a novel gene family: molecular cloning and detection in hemopoietic organs.</title>
        <authorList>
            <person name="Carramolino L."/>
            <person name="Lee B.C."/>
            <person name="Zaballos A."/>
            <person name="Peled A."/>
            <person name="Barthelemy I."/>
            <person name="Shav-Tal Y."/>
            <person name="Prieto I."/>
            <person name="Carmi P."/>
            <person name="Gothelf Y."/>
            <person name="Gonzalez de Buitrago G."/>
            <person name="Aracil M."/>
            <person name="Marquez G."/>
            <person name="Barbero J.L."/>
            <person name="Zipori D."/>
        </authorList>
    </citation>
    <scope>NUCLEOTIDE SEQUENCE [MRNA]</scope>
    <source>
        <tissue>Bone marrow stroma</tissue>
    </source>
</reference>
<reference key="2">
    <citation type="journal article" date="1998" name="Gene">
        <authorList>
            <person name="Carramolino L."/>
            <person name="Lee B.C."/>
            <person name="Zaballos A."/>
            <person name="Peled A."/>
            <person name="Barthelemy I."/>
            <person name="Shav-Tal Y."/>
            <person name="Prieto I."/>
            <person name="Carmi P."/>
            <person name="Gothelf Y."/>
            <person name="Gonzalez de Buitrago G."/>
            <person name="Aracil M."/>
            <person name="Marquez G."/>
            <person name="Barbero J.L."/>
            <person name="Zipori D."/>
        </authorList>
    </citation>
    <scope>ERRATUM OF PUBMED:9305759</scope>
</reference>
<reference key="3">
    <citation type="journal article" date="2005" name="Science">
        <title>The transcriptional landscape of the mammalian genome.</title>
        <authorList>
            <person name="Carninci P."/>
            <person name="Kasukawa T."/>
            <person name="Katayama S."/>
            <person name="Gough J."/>
            <person name="Frith M.C."/>
            <person name="Maeda N."/>
            <person name="Oyama R."/>
            <person name="Ravasi T."/>
            <person name="Lenhard B."/>
            <person name="Wells C."/>
            <person name="Kodzius R."/>
            <person name="Shimokawa K."/>
            <person name="Bajic V.B."/>
            <person name="Brenner S.E."/>
            <person name="Batalov S."/>
            <person name="Forrest A.R."/>
            <person name="Zavolan M."/>
            <person name="Davis M.J."/>
            <person name="Wilming L.G."/>
            <person name="Aidinis V."/>
            <person name="Allen J.E."/>
            <person name="Ambesi-Impiombato A."/>
            <person name="Apweiler R."/>
            <person name="Aturaliya R.N."/>
            <person name="Bailey T.L."/>
            <person name="Bansal M."/>
            <person name="Baxter L."/>
            <person name="Beisel K.W."/>
            <person name="Bersano T."/>
            <person name="Bono H."/>
            <person name="Chalk A.M."/>
            <person name="Chiu K.P."/>
            <person name="Choudhary V."/>
            <person name="Christoffels A."/>
            <person name="Clutterbuck D.R."/>
            <person name="Crowe M.L."/>
            <person name="Dalla E."/>
            <person name="Dalrymple B.P."/>
            <person name="de Bono B."/>
            <person name="Della Gatta G."/>
            <person name="di Bernardo D."/>
            <person name="Down T."/>
            <person name="Engstrom P."/>
            <person name="Fagiolini M."/>
            <person name="Faulkner G."/>
            <person name="Fletcher C.F."/>
            <person name="Fukushima T."/>
            <person name="Furuno M."/>
            <person name="Futaki S."/>
            <person name="Gariboldi M."/>
            <person name="Georgii-Hemming P."/>
            <person name="Gingeras T.R."/>
            <person name="Gojobori T."/>
            <person name="Green R.E."/>
            <person name="Gustincich S."/>
            <person name="Harbers M."/>
            <person name="Hayashi Y."/>
            <person name="Hensch T.K."/>
            <person name="Hirokawa N."/>
            <person name="Hill D."/>
            <person name="Huminiecki L."/>
            <person name="Iacono M."/>
            <person name="Ikeo K."/>
            <person name="Iwama A."/>
            <person name="Ishikawa T."/>
            <person name="Jakt M."/>
            <person name="Kanapin A."/>
            <person name="Katoh M."/>
            <person name="Kawasawa Y."/>
            <person name="Kelso J."/>
            <person name="Kitamura H."/>
            <person name="Kitano H."/>
            <person name="Kollias G."/>
            <person name="Krishnan S.P."/>
            <person name="Kruger A."/>
            <person name="Kummerfeld S.K."/>
            <person name="Kurochkin I.V."/>
            <person name="Lareau L.F."/>
            <person name="Lazarevic D."/>
            <person name="Lipovich L."/>
            <person name="Liu J."/>
            <person name="Liuni S."/>
            <person name="McWilliam S."/>
            <person name="Madan Babu M."/>
            <person name="Madera M."/>
            <person name="Marchionni L."/>
            <person name="Matsuda H."/>
            <person name="Matsuzawa S."/>
            <person name="Miki H."/>
            <person name="Mignone F."/>
            <person name="Miyake S."/>
            <person name="Morris K."/>
            <person name="Mottagui-Tabar S."/>
            <person name="Mulder N."/>
            <person name="Nakano N."/>
            <person name="Nakauchi H."/>
            <person name="Ng P."/>
            <person name="Nilsson R."/>
            <person name="Nishiguchi S."/>
            <person name="Nishikawa S."/>
            <person name="Nori F."/>
            <person name="Ohara O."/>
            <person name="Okazaki Y."/>
            <person name="Orlando V."/>
            <person name="Pang K.C."/>
            <person name="Pavan W.J."/>
            <person name="Pavesi G."/>
            <person name="Pesole G."/>
            <person name="Petrovsky N."/>
            <person name="Piazza S."/>
            <person name="Reed J."/>
            <person name="Reid J.F."/>
            <person name="Ring B.Z."/>
            <person name="Ringwald M."/>
            <person name="Rost B."/>
            <person name="Ruan Y."/>
            <person name="Salzberg S.L."/>
            <person name="Sandelin A."/>
            <person name="Schneider C."/>
            <person name="Schoenbach C."/>
            <person name="Sekiguchi K."/>
            <person name="Semple C.A."/>
            <person name="Seno S."/>
            <person name="Sessa L."/>
            <person name="Sheng Y."/>
            <person name="Shibata Y."/>
            <person name="Shimada H."/>
            <person name="Shimada K."/>
            <person name="Silva D."/>
            <person name="Sinclair B."/>
            <person name="Sperling S."/>
            <person name="Stupka E."/>
            <person name="Sugiura K."/>
            <person name="Sultana R."/>
            <person name="Takenaka Y."/>
            <person name="Taki K."/>
            <person name="Tammoja K."/>
            <person name="Tan S.L."/>
            <person name="Tang S."/>
            <person name="Taylor M.S."/>
            <person name="Tegner J."/>
            <person name="Teichmann S.A."/>
            <person name="Ueda H.R."/>
            <person name="van Nimwegen E."/>
            <person name="Verardo R."/>
            <person name="Wei C.L."/>
            <person name="Yagi K."/>
            <person name="Yamanishi H."/>
            <person name="Zabarovsky E."/>
            <person name="Zhu S."/>
            <person name="Zimmer A."/>
            <person name="Hide W."/>
            <person name="Bult C."/>
            <person name="Grimmond S.M."/>
            <person name="Teasdale R.D."/>
            <person name="Liu E.T."/>
            <person name="Brusic V."/>
            <person name="Quackenbush J."/>
            <person name="Wahlestedt C."/>
            <person name="Mattick J.S."/>
            <person name="Hume D.A."/>
            <person name="Kai C."/>
            <person name="Sasaki D."/>
            <person name="Tomaru Y."/>
            <person name="Fukuda S."/>
            <person name="Kanamori-Katayama M."/>
            <person name="Suzuki M."/>
            <person name="Aoki J."/>
            <person name="Arakawa T."/>
            <person name="Iida J."/>
            <person name="Imamura K."/>
            <person name="Itoh M."/>
            <person name="Kato T."/>
            <person name="Kawaji H."/>
            <person name="Kawagashira N."/>
            <person name="Kawashima T."/>
            <person name="Kojima M."/>
            <person name="Kondo S."/>
            <person name="Konno H."/>
            <person name="Nakano K."/>
            <person name="Ninomiya N."/>
            <person name="Nishio T."/>
            <person name="Okada M."/>
            <person name="Plessy C."/>
            <person name="Shibata K."/>
            <person name="Shiraki T."/>
            <person name="Suzuki S."/>
            <person name="Tagami M."/>
            <person name="Waki K."/>
            <person name="Watahiki A."/>
            <person name="Okamura-Oho Y."/>
            <person name="Suzuki H."/>
            <person name="Kawai J."/>
            <person name="Hayashizaki Y."/>
        </authorList>
    </citation>
    <scope>NUCLEOTIDE SEQUENCE [LARGE SCALE MRNA]</scope>
    <source>
        <strain>C57BL/6J</strain>
        <tissue>Thymus</tissue>
    </source>
</reference>
<reference key="4">
    <citation type="journal article" date="2004" name="Genome Res.">
        <title>The status, quality, and expansion of the NIH full-length cDNA project: the Mammalian Gene Collection (MGC).</title>
        <authorList>
            <consortium name="The MGC Project Team"/>
        </authorList>
    </citation>
    <scope>NUCLEOTIDE SEQUENCE [LARGE SCALE MRNA]</scope>
    <source>
        <strain>C57BL/6J</strain>
        <tissue>Brain</tissue>
    </source>
</reference>
<reference key="5">
    <citation type="journal article" date="2010" name="Cell">
        <title>A tissue-specific atlas of mouse protein phosphorylation and expression.</title>
        <authorList>
            <person name="Huttlin E.L."/>
            <person name="Jedrychowski M.P."/>
            <person name="Elias J.E."/>
            <person name="Goswami T."/>
            <person name="Rad R."/>
            <person name="Beausoleil S.A."/>
            <person name="Villen J."/>
            <person name="Haas W."/>
            <person name="Sowa M.E."/>
            <person name="Gygi S.P."/>
        </authorList>
    </citation>
    <scope>PHOSPHORYLATION [LARGE SCALE ANALYSIS] AT SER-1062 AND SER-1065</scope>
    <scope>IDENTIFICATION BY MASS SPECTROMETRY [LARGE SCALE ANALYSIS]</scope>
    <source>
        <tissue>Kidney</tissue>
        <tissue>Lung</tissue>
        <tissue>Spleen</tissue>
        <tissue>Testis</tissue>
    </source>
</reference>
<proteinExistence type="evidence at protein level"/>
<sequence length="1258" mass="144440">MITSELPVLQDSTNETTAHSDAGSELEETEVKGKRKRGRPGRPPSTNKKPRKSPGEKSRIEAGIRGAGRGRANGHPQQNGDGDPVTLFEVVKLGKSAMQSVVDDWIELYKQDRDIALLDLINFFIQCSGCRGTVRIEMFRNMQNAEIIRKMTEEFDEDSGDYPLTMPGPQWKKFRSNFCEFIGVLIRQCQYSIIYDEYMMDTVISLLTGLSDSQVRAFRHTSTLAAMKLMTALVNVALNLSIHQDNTQRQYEAERNKMIGKRANERLELLLQKRKELQENQDEIENMMNSIFKGIFVHRYRDAIAEIRAICIEEIGVWMKMYSDAFLNDSYLKYVGWTLHDRQGEVRLKCLKALQSLYTNRELFPKLELFTNRFKDRIVSMTLDKEYDVAVEAIRLVTLILHGSEEALSNEDCENVYHLVYSAHRPVAVAAGEFLHKKLFSRHDPQAEEALAKRRGRNSPNGNLIRMLVLFFLESELHEHAAYLVDSLWESSQELLKDWECMTELLLEEPVQGEEAMSDRQESALIELMVCTIRQAAEAHPPVGRGTGKRVLTAKERKTQIDDRNKLTEHFIITLPMLLSKYSADAEKVANLLQIPQYFDLEIYSTGRMEKHLDALLKQIKFVVEKHVESDVLEACSKTYSILCSEEYTIQNRVDIARSQLIDEFVDRFNHSVEDLLQEGEEADDDDIYNVLSTLKRLTSFHNAHDLTKWDLFGNCYRLLKTGIEHGAMPEQIVVQALQCSHYSILWQLVKITDGSPSKEDLLVLRKTVKSFLAVCQQCLSNVNTPVKEQAFMLLCDLLMIFSHQLMTGGREGLQPLVFNPDTGLQSELLSFVMDHVFIDQDEENQSMEGDEEDEANKIEALHKRRNLLAAFSKLIIYDIVDMHAAADIFKHYMKYYNDYGDIIKETLSKTRQIDKIQCAKTLILSLQQLFNELVQEQGPNLDRTSAHVSGIKELARRFALTFGLDQIKTREAVATLHKDGIEFAFKYQNQKGQEYPPPNLAFLEVLSEFSSKLLRQDKKTVHSYLEKFLTEQMMERREDVWLPLISYRNSLVTGGEDDRMSVNSGSSSSKTSSVRSKKGRPPLHRKRVEDESLDNTWLNRTDTMIQTPGPLPTPQLTSTVLRENSRPMGEQIQEPESEHGSEPDFLHNPQMQISWLGQPKLEDLNRKDRTGMNYMKVRAGVRHAVRGLMEEDAEPIFEDVMMSSRSQLEDMNEEFEDTMVIDLPPSRNRRERAELRPDFFDSAAIIEDDSGFGMPMF</sequence>
<dbReference type="EMBL" id="Z75332">
    <property type="protein sequence ID" value="CAA99733.1"/>
    <property type="molecule type" value="mRNA"/>
</dbReference>
<dbReference type="EMBL" id="AK017978">
    <property type="protein sequence ID" value="BAB31022.1"/>
    <property type="status" value="ALT_SEQ"/>
    <property type="molecule type" value="mRNA"/>
</dbReference>
<dbReference type="EMBL" id="BC062954">
    <property type="protein sequence ID" value="AAH62954.1"/>
    <property type="molecule type" value="mRNA"/>
</dbReference>
<dbReference type="CCDS" id="CCDS23441.1"/>
<dbReference type="PIR" id="T30252">
    <property type="entry name" value="T30252"/>
</dbReference>
<dbReference type="RefSeq" id="NP_001407217.1">
    <property type="nucleotide sequence ID" value="NM_001420288.1"/>
</dbReference>
<dbReference type="RefSeq" id="NP_033308.2">
    <property type="nucleotide sequence ID" value="NM_009282.3"/>
</dbReference>
<dbReference type="RefSeq" id="XP_006510986.1">
    <property type="nucleotide sequence ID" value="XM_006510923.2"/>
</dbReference>
<dbReference type="RefSeq" id="XP_006510987.1">
    <property type="nucleotide sequence ID" value="XM_006510924.4"/>
</dbReference>
<dbReference type="RefSeq" id="XP_030100032.1">
    <property type="nucleotide sequence ID" value="XM_030244172.2"/>
</dbReference>
<dbReference type="SMR" id="Q9D3E6"/>
<dbReference type="BioGRID" id="203517">
    <property type="interactions" value="5"/>
</dbReference>
<dbReference type="FunCoup" id="Q9D3E6">
    <property type="interactions" value="4975"/>
</dbReference>
<dbReference type="IntAct" id="Q9D3E6">
    <property type="interactions" value="4"/>
</dbReference>
<dbReference type="MINT" id="Q9D3E6"/>
<dbReference type="STRING" id="10090.ENSMUSP00000116205"/>
<dbReference type="GlyGen" id="Q9D3E6">
    <property type="glycosylation" value="1 site"/>
</dbReference>
<dbReference type="iPTMnet" id="Q9D3E6"/>
<dbReference type="PhosphoSitePlus" id="Q9D3E6"/>
<dbReference type="PaxDb" id="10090-ENSMUSP00000116205"/>
<dbReference type="PeptideAtlas" id="Q9D3E6"/>
<dbReference type="ProteomicsDB" id="254578"/>
<dbReference type="Pumba" id="Q9D3E6"/>
<dbReference type="Antibodypedia" id="17829">
    <property type="antibodies" value="270 antibodies from 28 providers"/>
</dbReference>
<dbReference type="DNASU" id="20842"/>
<dbReference type="Ensembl" id="ENSMUST00000129269.8">
    <property type="protein sequence ID" value="ENSMUSP00000116205.2"/>
    <property type="gene ID" value="ENSMUSG00000037286.16"/>
</dbReference>
<dbReference type="GeneID" id="20842"/>
<dbReference type="KEGG" id="mmu:20842"/>
<dbReference type="UCSC" id="uc009rfa.1">
    <property type="organism name" value="mouse"/>
</dbReference>
<dbReference type="AGR" id="MGI:1098658"/>
<dbReference type="CTD" id="10274"/>
<dbReference type="MGI" id="MGI:1098658">
    <property type="gene designation" value="Stag1"/>
</dbReference>
<dbReference type="VEuPathDB" id="HostDB:ENSMUSG00000037286"/>
<dbReference type="eggNOG" id="KOG2011">
    <property type="taxonomic scope" value="Eukaryota"/>
</dbReference>
<dbReference type="GeneTree" id="ENSGT00950000182972"/>
<dbReference type="InParanoid" id="Q9D3E6"/>
<dbReference type="OMA" id="QIQEAAY"/>
<dbReference type="OrthoDB" id="498590at2759"/>
<dbReference type="PhylomeDB" id="Q9D3E6"/>
<dbReference type="TreeFam" id="TF314604"/>
<dbReference type="Reactome" id="R-MMU-2467813">
    <property type="pathway name" value="Separation of Sister Chromatids"/>
</dbReference>
<dbReference type="Reactome" id="R-MMU-2468052">
    <property type="pathway name" value="Establishment of Sister Chromatid Cohesion"/>
</dbReference>
<dbReference type="Reactome" id="R-MMU-2470946">
    <property type="pathway name" value="Cohesin Loading onto Chromatin"/>
</dbReference>
<dbReference type="Reactome" id="R-MMU-2500257">
    <property type="pathway name" value="Resolution of Sister Chromatid Cohesion"/>
</dbReference>
<dbReference type="Reactome" id="R-MMU-3108214">
    <property type="pathway name" value="SUMOylation of DNA damage response and repair proteins"/>
</dbReference>
<dbReference type="BioGRID-ORCS" id="20842">
    <property type="hits" value="9 hits in 81 CRISPR screens"/>
</dbReference>
<dbReference type="ChiTaRS" id="Stag1">
    <property type="organism name" value="mouse"/>
</dbReference>
<dbReference type="PRO" id="PR:Q9D3E6"/>
<dbReference type="Proteomes" id="UP000000589">
    <property type="component" value="Chromosome 9"/>
</dbReference>
<dbReference type="RNAct" id="Q9D3E6">
    <property type="molecule type" value="protein"/>
</dbReference>
<dbReference type="Bgee" id="ENSMUSG00000037286">
    <property type="expression patterns" value="Expressed in embryonic post-anal tail and 258 other cell types or tissues"/>
</dbReference>
<dbReference type="ExpressionAtlas" id="Q9D3E6">
    <property type="expression patterns" value="baseline and differential"/>
</dbReference>
<dbReference type="GO" id="GO:0000785">
    <property type="term" value="C:chromatin"/>
    <property type="evidence" value="ECO:0000314"/>
    <property type="project" value="MGI"/>
</dbReference>
<dbReference type="GO" id="GO:0005929">
    <property type="term" value="C:cilium"/>
    <property type="evidence" value="ECO:0007669"/>
    <property type="project" value="Ensembl"/>
</dbReference>
<dbReference type="GO" id="GO:0008278">
    <property type="term" value="C:cohesin complex"/>
    <property type="evidence" value="ECO:0007669"/>
    <property type="project" value="Ensembl"/>
</dbReference>
<dbReference type="GO" id="GO:0097431">
    <property type="term" value="C:mitotic spindle pole"/>
    <property type="evidence" value="ECO:0007669"/>
    <property type="project" value="Ensembl"/>
</dbReference>
<dbReference type="GO" id="GO:0016604">
    <property type="term" value="C:nuclear body"/>
    <property type="evidence" value="ECO:0007669"/>
    <property type="project" value="Ensembl"/>
</dbReference>
<dbReference type="GO" id="GO:0016363">
    <property type="term" value="C:nuclear matrix"/>
    <property type="evidence" value="ECO:0007669"/>
    <property type="project" value="Ensembl"/>
</dbReference>
<dbReference type="GO" id="GO:0005654">
    <property type="term" value="C:nucleoplasm"/>
    <property type="evidence" value="ECO:0000304"/>
    <property type="project" value="Reactome"/>
</dbReference>
<dbReference type="GO" id="GO:0003682">
    <property type="term" value="F:chromatin binding"/>
    <property type="evidence" value="ECO:0000314"/>
    <property type="project" value="MGI"/>
</dbReference>
<dbReference type="GO" id="GO:0051301">
    <property type="term" value="P:cell division"/>
    <property type="evidence" value="ECO:0007669"/>
    <property type="project" value="UniProtKB-KW"/>
</dbReference>
<dbReference type="GO" id="GO:0090307">
    <property type="term" value="P:mitotic spindle assembly"/>
    <property type="evidence" value="ECO:0007669"/>
    <property type="project" value="Ensembl"/>
</dbReference>
<dbReference type="InterPro" id="IPR016024">
    <property type="entry name" value="ARM-type_fold"/>
</dbReference>
<dbReference type="InterPro" id="IPR039662">
    <property type="entry name" value="Cohesin_Scc3/SA"/>
</dbReference>
<dbReference type="InterPro" id="IPR056396">
    <property type="entry name" value="HEAT_SCC3-SA"/>
</dbReference>
<dbReference type="InterPro" id="IPR020839">
    <property type="entry name" value="SCD"/>
</dbReference>
<dbReference type="InterPro" id="IPR013721">
    <property type="entry name" value="STAG"/>
</dbReference>
<dbReference type="PANTHER" id="PTHR11199:SF6">
    <property type="entry name" value="COHESIN SUBUNIT SA-1"/>
    <property type="match status" value="1"/>
</dbReference>
<dbReference type="PANTHER" id="PTHR11199">
    <property type="entry name" value="STROMAL ANTIGEN"/>
    <property type="match status" value="1"/>
</dbReference>
<dbReference type="Pfam" id="PF24571">
    <property type="entry name" value="HEAT_SCC3-SA"/>
    <property type="match status" value="1"/>
</dbReference>
<dbReference type="Pfam" id="PF21581">
    <property type="entry name" value="SCD"/>
    <property type="match status" value="1"/>
</dbReference>
<dbReference type="Pfam" id="PF08514">
    <property type="entry name" value="STAG"/>
    <property type="match status" value="1"/>
</dbReference>
<dbReference type="SUPFAM" id="SSF48371">
    <property type="entry name" value="ARM repeat"/>
    <property type="match status" value="1"/>
</dbReference>
<dbReference type="PROSITE" id="PS51425">
    <property type="entry name" value="SCD"/>
    <property type="match status" value="1"/>
</dbReference>
<comment type="function">
    <text evidence="1">Component of cohesin complex, a complex required for the cohesion of sister chromatids after DNA replication. The cohesin complex apparently forms a large proteinaceous ring within which sister chromatids can be trapped. At anaphase, the complex is cleaved and dissociates from chromatin, allowing sister chromatids to segregate. The cohesin complex may also play a role in spindle pole assembly during mitosis (By similarity).</text>
</comment>
<comment type="subunit">
    <text evidence="2 3">Cohesin complexes are composed of a heterodimer between a SMC1 protein (SMC1A or SMC1B) and SMC3, which are attached via their hinge domain, and RAD21 which link them at their heads, and one STAG protein (STAG1, STAG2 or STAG3). In cohesin complexes, STAG1 is mutually exclusive with STAG2 and STAG3. Interacts directly with RAD21 in cohesin complex. The cohesin complex interacts with the cohesin loading complex subunits NIPBL/Scc2 (via HEAT repeats) and MAU2/Scc4. NIPBL directly contacts all members of the complex, RAD21, SMC1A/B, SMC3 and STAG1 (By similarity).</text>
</comment>
<comment type="subcellular location">
    <subcellularLocation>
        <location evidence="4">Nucleus</location>
    </subcellularLocation>
    <subcellularLocation>
        <location evidence="1">Chromosome</location>
    </subcellularLocation>
    <text evidence="1">Associates with chromatin. Before prophase it is scattered along chromosome arms. During prophase, most of cohesin complexes dissociate from chromatin probably because of phosphorylation by PLK1, except at centromeres, where cohesin complexes remain. At anaphase, the RAD21 subunit of cohesin is cleaved, leading to the dissociation of the complex from chromosomes, allowing chromosome separation (By similarity).</text>
</comment>
<comment type="PTM">
    <text evidence="1">Phosphorylated by PLK1. The large dissociation of cohesin from chromosome arms during prophase is partly due to its phosphorylation (By similarity).</text>
</comment>
<comment type="similarity">
    <text evidence="6">Belongs to the SCC3 family.</text>
</comment>
<comment type="sequence caution" evidence="6">
    <conflict type="miscellaneous discrepancy">
        <sequence resource="EMBL-CDS" id="BAB31022"/>
    </conflict>
    <text>Probable exon deletions within the cDNA.</text>
</comment>
<feature type="chain" id="PRO_0000120183" description="Cohesin subunit SA-1">
    <location>
        <begin position="1"/>
        <end position="1258"/>
    </location>
</feature>
<feature type="domain" description="SCD" evidence="4">
    <location>
        <begin position="296"/>
        <end position="381"/>
    </location>
</feature>
<feature type="region of interest" description="Disordered" evidence="5">
    <location>
        <begin position="1"/>
        <end position="59"/>
    </location>
</feature>
<feature type="region of interest" description="Disordered" evidence="5">
    <location>
        <begin position="1055"/>
        <end position="1148"/>
    </location>
</feature>
<feature type="compositionally biased region" description="Polar residues" evidence="5">
    <location>
        <begin position="10"/>
        <end position="19"/>
    </location>
</feature>
<feature type="compositionally biased region" description="Low complexity" evidence="5">
    <location>
        <begin position="1062"/>
        <end position="1075"/>
    </location>
</feature>
<feature type="compositionally biased region" description="Basic residues" evidence="5">
    <location>
        <begin position="1076"/>
        <end position="1087"/>
    </location>
</feature>
<feature type="compositionally biased region" description="Polar residues" evidence="5">
    <location>
        <begin position="1095"/>
        <end position="1106"/>
    </location>
</feature>
<feature type="compositionally biased region" description="Basic and acidic residues" evidence="5">
    <location>
        <begin position="1137"/>
        <end position="1146"/>
    </location>
</feature>
<feature type="modified residue" description="Phosphoserine" evidence="2">
    <location>
        <position position="24"/>
    </location>
</feature>
<feature type="modified residue" description="Phosphoserine" evidence="2">
    <location>
        <position position="756"/>
    </location>
</feature>
<feature type="modified residue" description="Phosphoserine" evidence="7">
    <location>
        <position position="1062"/>
    </location>
</feature>
<feature type="modified residue" description="Phosphoserine" evidence="7">
    <location>
        <position position="1065"/>
    </location>
</feature>
<feature type="modified residue" description="Phosphoserine" evidence="2">
    <location>
        <position position="1093"/>
    </location>
</feature>
<feature type="cross-link" description="Glycyl lysine isopeptide (Lys-Gly) (interchain with G-Cter in SUMO2)" evidence="2">
    <location>
        <position position="1161"/>
    </location>
</feature>
<feature type="sequence conflict" description="In Ref. 1; CAA99733." evidence="6" ref="1">
    <original>AGSE</original>
    <variation>HGRQ</variation>
    <location>
        <begin position="22"/>
        <end position="25"/>
    </location>
</feature>
<feature type="sequence conflict" description="In Ref. 1; CAA99733." evidence="6" ref="1">
    <original>A</original>
    <variation>R</variation>
    <location>
        <position position="97"/>
    </location>
</feature>
<gene>
    <name type="primary">Stag1</name>
    <name type="synonym">Sa1</name>
</gene>
<organism>
    <name type="scientific">Mus musculus</name>
    <name type="common">Mouse</name>
    <dbReference type="NCBI Taxonomy" id="10090"/>
    <lineage>
        <taxon>Eukaryota</taxon>
        <taxon>Metazoa</taxon>
        <taxon>Chordata</taxon>
        <taxon>Craniata</taxon>
        <taxon>Vertebrata</taxon>
        <taxon>Euteleostomi</taxon>
        <taxon>Mammalia</taxon>
        <taxon>Eutheria</taxon>
        <taxon>Euarchontoglires</taxon>
        <taxon>Glires</taxon>
        <taxon>Rodentia</taxon>
        <taxon>Myomorpha</taxon>
        <taxon>Muroidea</taxon>
        <taxon>Muridae</taxon>
        <taxon>Murinae</taxon>
        <taxon>Mus</taxon>
        <taxon>Mus</taxon>
    </lineage>
</organism>
<evidence type="ECO:0000250" key="1"/>
<evidence type="ECO:0000250" key="2">
    <source>
        <dbReference type="UniProtKB" id="Q8WVM7"/>
    </source>
</evidence>
<evidence type="ECO:0000250" key="3">
    <source>
        <dbReference type="UniProtKB" id="Q9DGN1"/>
    </source>
</evidence>
<evidence type="ECO:0000255" key="4">
    <source>
        <dbReference type="PROSITE-ProRule" id="PRU00750"/>
    </source>
</evidence>
<evidence type="ECO:0000256" key="5">
    <source>
        <dbReference type="SAM" id="MobiDB-lite"/>
    </source>
</evidence>
<evidence type="ECO:0000305" key="6"/>
<evidence type="ECO:0007744" key="7">
    <source>
    </source>
</evidence>
<name>STAG1_MOUSE</name>
<keyword id="KW-0131">Cell cycle</keyword>
<keyword id="KW-0132">Cell division</keyword>
<keyword id="KW-0158">Chromosome</keyword>
<keyword id="KW-0159">Chromosome partition</keyword>
<keyword id="KW-1017">Isopeptide bond</keyword>
<keyword id="KW-0498">Mitosis</keyword>
<keyword id="KW-0539">Nucleus</keyword>
<keyword id="KW-0597">Phosphoprotein</keyword>
<keyword id="KW-1185">Reference proteome</keyword>
<keyword id="KW-0832">Ubl conjugation</keyword>
<protein>
    <recommendedName>
        <fullName>Cohesin subunit SA-1</fullName>
    </recommendedName>
    <alternativeName>
        <fullName>SCC3 homolog 1</fullName>
    </alternativeName>
    <alternativeName>
        <fullName>Stromal antigen 1</fullName>
    </alternativeName>
</protein>
<accession>Q9D3E6</accession>
<accession>O08982</accession>
<accession>Q6P5D1</accession>